<dbReference type="EC" id="3.4.24.-" evidence="1"/>
<dbReference type="EMBL" id="CP001392">
    <property type="protein sequence ID" value="ACM34456.1"/>
    <property type="molecule type" value="Genomic_DNA"/>
</dbReference>
<dbReference type="RefSeq" id="WP_015914297.1">
    <property type="nucleotide sequence ID" value="NC_011992.1"/>
</dbReference>
<dbReference type="SMR" id="B9MFV5"/>
<dbReference type="MEROPS" id="M48.002"/>
<dbReference type="KEGG" id="dia:Dtpsy_3023"/>
<dbReference type="eggNOG" id="COG0501">
    <property type="taxonomic scope" value="Bacteria"/>
</dbReference>
<dbReference type="HOGENOM" id="CLU_042266_1_0_4"/>
<dbReference type="Proteomes" id="UP000000450">
    <property type="component" value="Chromosome"/>
</dbReference>
<dbReference type="GO" id="GO:0005886">
    <property type="term" value="C:plasma membrane"/>
    <property type="evidence" value="ECO:0007669"/>
    <property type="project" value="UniProtKB-SubCell"/>
</dbReference>
<dbReference type="GO" id="GO:0004222">
    <property type="term" value="F:metalloendopeptidase activity"/>
    <property type="evidence" value="ECO:0007669"/>
    <property type="project" value="UniProtKB-UniRule"/>
</dbReference>
<dbReference type="GO" id="GO:0008270">
    <property type="term" value="F:zinc ion binding"/>
    <property type="evidence" value="ECO:0007669"/>
    <property type="project" value="UniProtKB-UniRule"/>
</dbReference>
<dbReference type="GO" id="GO:0006508">
    <property type="term" value="P:proteolysis"/>
    <property type="evidence" value="ECO:0007669"/>
    <property type="project" value="UniProtKB-KW"/>
</dbReference>
<dbReference type="CDD" id="cd07335">
    <property type="entry name" value="M48B_HtpX_like"/>
    <property type="match status" value="1"/>
</dbReference>
<dbReference type="Gene3D" id="3.30.2010.10">
    <property type="entry name" value="Metalloproteases ('zincins'), catalytic domain"/>
    <property type="match status" value="1"/>
</dbReference>
<dbReference type="HAMAP" id="MF_00188">
    <property type="entry name" value="Pept_M48_protease_HtpX"/>
    <property type="match status" value="1"/>
</dbReference>
<dbReference type="InterPro" id="IPR050083">
    <property type="entry name" value="HtpX_protease"/>
</dbReference>
<dbReference type="InterPro" id="IPR022919">
    <property type="entry name" value="Pept_M48_protease_HtpX"/>
</dbReference>
<dbReference type="InterPro" id="IPR001915">
    <property type="entry name" value="Peptidase_M48"/>
</dbReference>
<dbReference type="NCBIfam" id="NF003965">
    <property type="entry name" value="PRK05457.1"/>
    <property type="match status" value="1"/>
</dbReference>
<dbReference type="PANTHER" id="PTHR43221">
    <property type="entry name" value="PROTEASE HTPX"/>
    <property type="match status" value="1"/>
</dbReference>
<dbReference type="PANTHER" id="PTHR43221:SF1">
    <property type="entry name" value="PROTEASE HTPX"/>
    <property type="match status" value="1"/>
</dbReference>
<dbReference type="Pfam" id="PF01435">
    <property type="entry name" value="Peptidase_M48"/>
    <property type="match status" value="1"/>
</dbReference>
<protein>
    <recommendedName>
        <fullName evidence="1">Protease HtpX homolog</fullName>
        <ecNumber evidence="1">3.4.24.-</ecNumber>
    </recommendedName>
</protein>
<gene>
    <name evidence="1" type="primary">htpX</name>
    <name type="ordered locus">Dtpsy_3023</name>
</gene>
<keyword id="KW-0997">Cell inner membrane</keyword>
<keyword id="KW-1003">Cell membrane</keyword>
<keyword id="KW-0378">Hydrolase</keyword>
<keyword id="KW-0472">Membrane</keyword>
<keyword id="KW-0479">Metal-binding</keyword>
<keyword id="KW-0482">Metalloprotease</keyword>
<keyword id="KW-0645">Protease</keyword>
<keyword id="KW-1185">Reference proteome</keyword>
<keyword id="KW-0812">Transmembrane</keyword>
<keyword id="KW-1133">Transmembrane helix</keyword>
<keyword id="KW-0862">Zinc</keyword>
<name>HTPX_ACIET</name>
<feature type="chain" id="PRO_1000124226" description="Protease HtpX homolog">
    <location>
        <begin position="1"/>
        <end position="292"/>
    </location>
</feature>
<feature type="transmembrane region" description="Helical" evidence="1">
    <location>
        <begin position="4"/>
        <end position="24"/>
    </location>
</feature>
<feature type="transmembrane region" description="Helical" evidence="1">
    <location>
        <begin position="38"/>
        <end position="58"/>
    </location>
</feature>
<feature type="transmembrane region" description="Helical" evidence="1">
    <location>
        <begin position="152"/>
        <end position="172"/>
    </location>
</feature>
<feature type="transmembrane region" description="Helical" evidence="1">
    <location>
        <begin position="199"/>
        <end position="219"/>
    </location>
</feature>
<feature type="active site" evidence="1">
    <location>
        <position position="145"/>
    </location>
</feature>
<feature type="binding site" evidence="1">
    <location>
        <position position="144"/>
    </location>
    <ligand>
        <name>Zn(2+)</name>
        <dbReference type="ChEBI" id="CHEBI:29105"/>
        <note>catalytic</note>
    </ligand>
</feature>
<feature type="binding site" evidence="1">
    <location>
        <position position="148"/>
    </location>
    <ligand>
        <name>Zn(2+)</name>
        <dbReference type="ChEBI" id="CHEBI:29105"/>
        <note>catalytic</note>
    </ligand>
</feature>
<feature type="binding site" evidence="1">
    <location>
        <position position="224"/>
    </location>
    <ligand>
        <name>Zn(2+)</name>
        <dbReference type="ChEBI" id="CHEBI:29105"/>
        <note>catalytic</note>
    </ligand>
</feature>
<evidence type="ECO:0000255" key="1">
    <source>
        <dbReference type="HAMAP-Rule" id="MF_00188"/>
    </source>
</evidence>
<comment type="cofactor">
    <cofactor evidence="1">
        <name>Zn(2+)</name>
        <dbReference type="ChEBI" id="CHEBI:29105"/>
    </cofactor>
    <text evidence="1">Binds 1 zinc ion per subunit.</text>
</comment>
<comment type="subcellular location">
    <subcellularLocation>
        <location evidence="1">Cell inner membrane</location>
        <topology evidence="1">Multi-pass membrane protein</topology>
    </subcellularLocation>
</comment>
<comment type="similarity">
    <text evidence="1">Belongs to the peptidase M48B family.</text>
</comment>
<accession>B9MFV5</accession>
<organism>
    <name type="scientific">Acidovorax ebreus (strain TPSY)</name>
    <name type="common">Diaphorobacter sp. (strain TPSY)</name>
    <dbReference type="NCBI Taxonomy" id="535289"/>
    <lineage>
        <taxon>Bacteria</taxon>
        <taxon>Pseudomonadati</taxon>
        <taxon>Pseudomonadota</taxon>
        <taxon>Betaproteobacteria</taxon>
        <taxon>Burkholderiales</taxon>
        <taxon>Comamonadaceae</taxon>
        <taxon>Diaphorobacter</taxon>
    </lineage>
</organism>
<reference key="1">
    <citation type="submission" date="2009-01" db="EMBL/GenBank/DDBJ databases">
        <title>Complete sequence of Diaphorobacter sp. TPSY.</title>
        <authorList>
            <consortium name="US DOE Joint Genome Institute"/>
            <person name="Lucas S."/>
            <person name="Copeland A."/>
            <person name="Lapidus A."/>
            <person name="Glavina del Rio T."/>
            <person name="Tice H."/>
            <person name="Bruce D."/>
            <person name="Goodwin L."/>
            <person name="Pitluck S."/>
            <person name="Chertkov O."/>
            <person name="Brettin T."/>
            <person name="Detter J.C."/>
            <person name="Han C."/>
            <person name="Larimer F."/>
            <person name="Land M."/>
            <person name="Hauser L."/>
            <person name="Kyrpides N."/>
            <person name="Mikhailova N."/>
            <person name="Coates J.D."/>
        </authorList>
    </citation>
    <scope>NUCLEOTIDE SEQUENCE [LARGE SCALE GENOMIC DNA]</scope>
    <source>
        <strain>TPSY</strain>
    </source>
</reference>
<sequence length="292" mass="31021">MKRIALFLLTNVAVVVVLGIVASLLGVNRYLTANGLNLGALLGFAFIMGFGGAIISLLMSKPIAKMSMGVTIINAPRNGDEAWIVETVRAFSEKAGIQMPEVGIYEGEPNAFATGAFKNSALVAVSTGLLQGMTREEVEAVIGHEVAHVANGDMVTMALIQGVMNTFVVFLSRVIGYAVDSFLRRNDENSSGPGIGYMITTIVLDIVLGFLAAIIVAWFSRQREFRADAGAAQLMGRKQPMINALHRLGGMRPGAMPQSLQAMGITGNIGKLFSSHPPIEERVAALQNSQSA</sequence>
<proteinExistence type="inferred from homology"/>